<protein>
    <recommendedName>
        <fullName evidence="1">ATP synthase epsilon chain, chloroplastic</fullName>
    </recommendedName>
    <alternativeName>
        <fullName evidence="1">ATP synthase F1 sector epsilon subunit</fullName>
    </alternativeName>
    <alternativeName>
        <fullName evidence="1">F-ATPase epsilon subunit</fullName>
    </alternativeName>
</protein>
<feature type="chain" id="PRO_0000275201" description="ATP synthase epsilon chain, chloroplastic">
    <location>
        <begin position="1"/>
        <end position="133"/>
    </location>
</feature>
<comment type="function">
    <text evidence="1">Produces ATP from ADP in the presence of a proton gradient across the membrane.</text>
</comment>
<comment type="subunit">
    <text evidence="1">F-type ATPases have 2 components, CF(1) - the catalytic core - and CF(0) - the membrane proton channel. CF(1) has five subunits: alpha(3), beta(3), gamma(1), delta(1), epsilon(1). CF(0) has three main subunits: a, b and c.</text>
</comment>
<comment type="subcellular location">
    <subcellularLocation>
        <location evidence="1">Plastid</location>
        <location evidence="1">Chloroplast thylakoid membrane</location>
        <topology evidence="1">Peripheral membrane protein</topology>
    </subcellularLocation>
</comment>
<comment type="similarity">
    <text evidence="1">Belongs to the ATPase epsilon chain family.</text>
</comment>
<evidence type="ECO:0000255" key="1">
    <source>
        <dbReference type="HAMAP-Rule" id="MF_00530"/>
    </source>
</evidence>
<dbReference type="EMBL" id="DQ345959">
    <property type="protein sequence ID" value="ABC73634.1"/>
    <property type="molecule type" value="Genomic_DNA"/>
</dbReference>
<dbReference type="RefSeq" id="YP_538941.1">
    <property type="nucleotide sequence ID" value="NC_007944.1"/>
</dbReference>
<dbReference type="SMR" id="Q2L911"/>
<dbReference type="GeneID" id="3989155"/>
<dbReference type="KEGG" id="ghi:3989155"/>
<dbReference type="OrthoDB" id="46547at41938"/>
<dbReference type="Proteomes" id="UP000189702">
    <property type="component" value="Chloroplast Pltd"/>
</dbReference>
<dbReference type="GO" id="GO:0009535">
    <property type="term" value="C:chloroplast thylakoid membrane"/>
    <property type="evidence" value="ECO:0007669"/>
    <property type="project" value="UniProtKB-SubCell"/>
</dbReference>
<dbReference type="GO" id="GO:0045259">
    <property type="term" value="C:proton-transporting ATP synthase complex"/>
    <property type="evidence" value="ECO:0007669"/>
    <property type="project" value="UniProtKB-KW"/>
</dbReference>
<dbReference type="GO" id="GO:0005524">
    <property type="term" value="F:ATP binding"/>
    <property type="evidence" value="ECO:0007669"/>
    <property type="project" value="UniProtKB-UniRule"/>
</dbReference>
<dbReference type="GO" id="GO:0046933">
    <property type="term" value="F:proton-transporting ATP synthase activity, rotational mechanism"/>
    <property type="evidence" value="ECO:0007669"/>
    <property type="project" value="UniProtKB-UniRule"/>
</dbReference>
<dbReference type="GO" id="GO:0015986">
    <property type="term" value="P:proton motive force-driven ATP synthesis"/>
    <property type="evidence" value="ECO:0000318"/>
    <property type="project" value="GO_Central"/>
</dbReference>
<dbReference type="CDD" id="cd12152">
    <property type="entry name" value="F1-ATPase_delta"/>
    <property type="match status" value="1"/>
</dbReference>
<dbReference type="FunFam" id="2.60.15.10:FF:000002">
    <property type="entry name" value="ATP synthase epsilon chain, chloroplastic"/>
    <property type="match status" value="1"/>
</dbReference>
<dbReference type="Gene3D" id="6.10.140.480">
    <property type="match status" value="1"/>
</dbReference>
<dbReference type="Gene3D" id="2.60.15.10">
    <property type="entry name" value="F0F1 ATP synthase delta/epsilon subunit, N-terminal"/>
    <property type="match status" value="1"/>
</dbReference>
<dbReference type="HAMAP" id="MF_00530">
    <property type="entry name" value="ATP_synth_epsil_bac"/>
    <property type="match status" value="1"/>
</dbReference>
<dbReference type="InterPro" id="IPR001469">
    <property type="entry name" value="ATP_synth_F1_dsu/esu"/>
</dbReference>
<dbReference type="InterPro" id="IPR020546">
    <property type="entry name" value="ATP_synth_F1_dsu/esu_N"/>
</dbReference>
<dbReference type="InterPro" id="IPR020547">
    <property type="entry name" value="ATP_synth_F1_esu_C"/>
</dbReference>
<dbReference type="InterPro" id="IPR036771">
    <property type="entry name" value="ATPsynth_dsu/esu_N"/>
</dbReference>
<dbReference type="NCBIfam" id="TIGR01216">
    <property type="entry name" value="ATP_synt_epsi"/>
    <property type="match status" value="1"/>
</dbReference>
<dbReference type="PANTHER" id="PTHR13822">
    <property type="entry name" value="ATP SYNTHASE DELTA/EPSILON CHAIN"/>
    <property type="match status" value="1"/>
</dbReference>
<dbReference type="PANTHER" id="PTHR13822:SF10">
    <property type="entry name" value="ATP SYNTHASE EPSILON CHAIN, CHLOROPLASTIC"/>
    <property type="match status" value="1"/>
</dbReference>
<dbReference type="Pfam" id="PF00401">
    <property type="entry name" value="ATP-synt_DE"/>
    <property type="match status" value="1"/>
</dbReference>
<dbReference type="Pfam" id="PF02823">
    <property type="entry name" value="ATP-synt_DE_N"/>
    <property type="match status" value="1"/>
</dbReference>
<dbReference type="SUPFAM" id="SSF51344">
    <property type="entry name" value="Epsilon subunit of F1F0-ATP synthase N-terminal domain"/>
    <property type="match status" value="1"/>
</dbReference>
<reference key="1">
    <citation type="journal article" date="2006" name="BMC Genomics">
        <title>The complete chloroplast genome sequence of Gossypium hirsutum: organization and phylogenetic relationships to other angiosperms.</title>
        <authorList>
            <person name="Lee S.-B."/>
            <person name="Kaittanis C."/>
            <person name="Jansen R.K."/>
            <person name="Hostetler J.B."/>
            <person name="Tallon L.J."/>
            <person name="Town C.D."/>
            <person name="Daniell H."/>
        </authorList>
    </citation>
    <scope>NUCLEOTIDE SEQUENCE [LARGE SCALE GENOMIC DNA]</scope>
    <source>
        <strain>cv. Coker 310FR</strain>
    </source>
</reference>
<organism>
    <name type="scientific">Gossypium hirsutum</name>
    <name type="common">Upland cotton</name>
    <name type="synonym">Gossypium mexicanum</name>
    <dbReference type="NCBI Taxonomy" id="3635"/>
    <lineage>
        <taxon>Eukaryota</taxon>
        <taxon>Viridiplantae</taxon>
        <taxon>Streptophyta</taxon>
        <taxon>Embryophyta</taxon>
        <taxon>Tracheophyta</taxon>
        <taxon>Spermatophyta</taxon>
        <taxon>Magnoliopsida</taxon>
        <taxon>eudicotyledons</taxon>
        <taxon>Gunneridae</taxon>
        <taxon>Pentapetalae</taxon>
        <taxon>rosids</taxon>
        <taxon>malvids</taxon>
        <taxon>Malvales</taxon>
        <taxon>Malvaceae</taxon>
        <taxon>Malvoideae</taxon>
        <taxon>Gossypium</taxon>
    </lineage>
</organism>
<gene>
    <name evidence="1" type="primary">atpE</name>
</gene>
<name>ATPE_GOSHI</name>
<geneLocation type="chloroplast"/>
<accession>Q2L911</accession>
<sequence length="133" mass="14567">MTLNLCVLTPNRIVWDSEVKEIILSTNSGQIGVLPNHAPIATAVDIGILRIRLNDQWLTMALMGGFARIGNNEITILVNDAEKGSDIDPQEAQQALEIAEANLRKAEGKRQTIEANLALRRARTRVEAINAIS</sequence>
<proteinExistence type="inferred from homology"/>
<keyword id="KW-0066">ATP synthesis</keyword>
<keyword id="KW-0139">CF(1)</keyword>
<keyword id="KW-0150">Chloroplast</keyword>
<keyword id="KW-0375">Hydrogen ion transport</keyword>
<keyword id="KW-0406">Ion transport</keyword>
<keyword id="KW-0472">Membrane</keyword>
<keyword id="KW-0934">Plastid</keyword>
<keyword id="KW-1185">Reference proteome</keyword>
<keyword id="KW-0793">Thylakoid</keyword>
<keyword id="KW-0813">Transport</keyword>